<dbReference type="EC" id="5.2.1.8" evidence="1"/>
<dbReference type="EMBL" id="AE014291">
    <property type="protein sequence ID" value="AAN29826.1"/>
    <property type="status" value="ALT_INIT"/>
    <property type="molecule type" value="Genomic_DNA"/>
</dbReference>
<dbReference type="EMBL" id="CP002997">
    <property type="protein sequence ID" value="AEM18243.1"/>
    <property type="status" value="ALT_INIT"/>
    <property type="molecule type" value="Genomic_DNA"/>
</dbReference>
<dbReference type="SMR" id="Q8G129"/>
<dbReference type="KEGG" id="bms:BR0898"/>
<dbReference type="KEGG" id="bsi:BS1330_I0894"/>
<dbReference type="PATRIC" id="fig|204722.22.peg.953"/>
<dbReference type="HOGENOM" id="CLU_033058_2_2_5"/>
<dbReference type="PhylomeDB" id="Q8G129"/>
<dbReference type="PRO" id="PR:Q8G129"/>
<dbReference type="Proteomes" id="UP000007104">
    <property type="component" value="Chromosome I"/>
</dbReference>
<dbReference type="GO" id="GO:0005737">
    <property type="term" value="C:cytoplasm"/>
    <property type="evidence" value="ECO:0007669"/>
    <property type="project" value="UniProtKB-SubCell"/>
</dbReference>
<dbReference type="GO" id="GO:0003755">
    <property type="term" value="F:peptidyl-prolyl cis-trans isomerase activity"/>
    <property type="evidence" value="ECO:0007669"/>
    <property type="project" value="UniProtKB-UniRule"/>
</dbReference>
<dbReference type="GO" id="GO:0044183">
    <property type="term" value="F:protein folding chaperone"/>
    <property type="evidence" value="ECO:0007669"/>
    <property type="project" value="TreeGrafter"/>
</dbReference>
<dbReference type="GO" id="GO:0043022">
    <property type="term" value="F:ribosome binding"/>
    <property type="evidence" value="ECO:0007669"/>
    <property type="project" value="TreeGrafter"/>
</dbReference>
<dbReference type="GO" id="GO:0051083">
    <property type="term" value="P:'de novo' cotranslational protein folding"/>
    <property type="evidence" value="ECO:0007669"/>
    <property type="project" value="TreeGrafter"/>
</dbReference>
<dbReference type="GO" id="GO:0051301">
    <property type="term" value="P:cell division"/>
    <property type="evidence" value="ECO:0007669"/>
    <property type="project" value="UniProtKB-KW"/>
</dbReference>
<dbReference type="GO" id="GO:0061077">
    <property type="term" value="P:chaperone-mediated protein folding"/>
    <property type="evidence" value="ECO:0007669"/>
    <property type="project" value="TreeGrafter"/>
</dbReference>
<dbReference type="GO" id="GO:0015031">
    <property type="term" value="P:protein transport"/>
    <property type="evidence" value="ECO:0007669"/>
    <property type="project" value="UniProtKB-UniRule"/>
</dbReference>
<dbReference type="GO" id="GO:0043335">
    <property type="term" value="P:protein unfolding"/>
    <property type="evidence" value="ECO:0007669"/>
    <property type="project" value="TreeGrafter"/>
</dbReference>
<dbReference type="FunFam" id="3.10.50.40:FF:000001">
    <property type="entry name" value="Trigger factor"/>
    <property type="match status" value="1"/>
</dbReference>
<dbReference type="Gene3D" id="3.10.50.40">
    <property type="match status" value="1"/>
</dbReference>
<dbReference type="Gene3D" id="3.30.70.1050">
    <property type="entry name" value="Trigger factor ribosome-binding domain"/>
    <property type="match status" value="1"/>
</dbReference>
<dbReference type="Gene3D" id="1.10.3120.10">
    <property type="entry name" value="Trigger factor, C-terminal domain"/>
    <property type="match status" value="1"/>
</dbReference>
<dbReference type="HAMAP" id="MF_00303">
    <property type="entry name" value="Trigger_factor_Tig"/>
    <property type="match status" value="1"/>
</dbReference>
<dbReference type="InterPro" id="IPR046357">
    <property type="entry name" value="PPIase_dom_sf"/>
</dbReference>
<dbReference type="InterPro" id="IPR001179">
    <property type="entry name" value="PPIase_FKBP_dom"/>
</dbReference>
<dbReference type="InterPro" id="IPR005215">
    <property type="entry name" value="Trig_fac"/>
</dbReference>
<dbReference type="InterPro" id="IPR008880">
    <property type="entry name" value="Trigger_fac_C"/>
</dbReference>
<dbReference type="InterPro" id="IPR037041">
    <property type="entry name" value="Trigger_fac_C_sf"/>
</dbReference>
<dbReference type="InterPro" id="IPR008881">
    <property type="entry name" value="Trigger_fac_ribosome-bd_bac"/>
</dbReference>
<dbReference type="InterPro" id="IPR036611">
    <property type="entry name" value="Trigger_fac_ribosome-bd_sf"/>
</dbReference>
<dbReference type="InterPro" id="IPR027304">
    <property type="entry name" value="Trigger_fact/SurA_dom_sf"/>
</dbReference>
<dbReference type="NCBIfam" id="TIGR00115">
    <property type="entry name" value="tig"/>
    <property type="match status" value="1"/>
</dbReference>
<dbReference type="PANTHER" id="PTHR30560">
    <property type="entry name" value="TRIGGER FACTOR CHAPERONE AND PEPTIDYL-PROLYL CIS/TRANS ISOMERASE"/>
    <property type="match status" value="1"/>
</dbReference>
<dbReference type="PANTHER" id="PTHR30560:SF3">
    <property type="entry name" value="TRIGGER FACTOR-LIKE PROTEIN TIG, CHLOROPLASTIC"/>
    <property type="match status" value="1"/>
</dbReference>
<dbReference type="Pfam" id="PF00254">
    <property type="entry name" value="FKBP_C"/>
    <property type="match status" value="1"/>
</dbReference>
<dbReference type="Pfam" id="PF05698">
    <property type="entry name" value="Trigger_C"/>
    <property type="match status" value="1"/>
</dbReference>
<dbReference type="Pfam" id="PF05697">
    <property type="entry name" value="Trigger_N"/>
    <property type="match status" value="1"/>
</dbReference>
<dbReference type="PIRSF" id="PIRSF003095">
    <property type="entry name" value="Trigger_factor"/>
    <property type="match status" value="1"/>
</dbReference>
<dbReference type="SUPFAM" id="SSF54534">
    <property type="entry name" value="FKBP-like"/>
    <property type="match status" value="1"/>
</dbReference>
<dbReference type="SUPFAM" id="SSF109998">
    <property type="entry name" value="Triger factor/SurA peptide-binding domain-like"/>
    <property type="match status" value="1"/>
</dbReference>
<dbReference type="SUPFAM" id="SSF102735">
    <property type="entry name" value="Trigger factor ribosome-binding domain"/>
    <property type="match status" value="1"/>
</dbReference>
<dbReference type="PROSITE" id="PS50059">
    <property type="entry name" value="FKBP_PPIASE"/>
    <property type="match status" value="1"/>
</dbReference>
<sequence length="477" mass="53631">MQVTETLNEGLKREIKVVVPAGDLEAKLAERLETARGRARINGFRPGKVPTAHLRKMYGKSFMAEIVNEILNDLSRSILAERNEKSATQPEVIMSEDEKEAEKVLDGKADFVFSLNYEVLPAIEVKDFSKIAVTREVVDISDEEVDEQVKRIASSTRTFETKKGKAENEDRVTIDYLGKLDGEPFEGGADNDAQLVLGSGQFIPGFEEQLIGLKAGDEKVITVTFPAEYGAAHLAGKEATFDIKVKEVAKPNELVLDDETAKKLGIESLERLRQVVREQIESQYGQVTRQKVKRQILDALDGDYQFETPQKLVDAEFNNIWQQINFDLQQAGRTFEDEETTEEAAREEYRKLAERRVRLGLVLSEIGEKAGVEVTEEELQRAVYDQVRRYPDQEKEIYDFLRRTPDAVANLRAPIFEEKVVDHLLANINVTDKKVSKEELTAEDEDAASEAKPAKKAAAKKKAAPKKKAEEGKSEEA</sequence>
<organism>
    <name type="scientific">Brucella suis biovar 1 (strain 1330)</name>
    <dbReference type="NCBI Taxonomy" id="204722"/>
    <lineage>
        <taxon>Bacteria</taxon>
        <taxon>Pseudomonadati</taxon>
        <taxon>Pseudomonadota</taxon>
        <taxon>Alphaproteobacteria</taxon>
        <taxon>Hyphomicrobiales</taxon>
        <taxon>Brucellaceae</taxon>
        <taxon>Brucella/Ochrobactrum group</taxon>
        <taxon>Brucella</taxon>
    </lineage>
</organism>
<comment type="function">
    <text evidence="1">Involved in protein export. Acts as a chaperone by maintaining the newly synthesized protein in an open conformation. Functions as a peptidyl-prolyl cis-trans isomerase.</text>
</comment>
<comment type="catalytic activity">
    <reaction evidence="1">
        <text>[protein]-peptidylproline (omega=180) = [protein]-peptidylproline (omega=0)</text>
        <dbReference type="Rhea" id="RHEA:16237"/>
        <dbReference type="Rhea" id="RHEA-COMP:10747"/>
        <dbReference type="Rhea" id="RHEA-COMP:10748"/>
        <dbReference type="ChEBI" id="CHEBI:83833"/>
        <dbReference type="ChEBI" id="CHEBI:83834"/>
        <dbReference type="EC" id="5.2.1.8"/>
    </reaction>
</comment>
<comment type="subcellular location">
    <subcellularLocation>
        <location>Cytoplasm</location>
    </subcellularLocation>
    <text evidence="1">About half TF is bound to the ribosome near the polypeptide exit tunnel while the other half is free in the cytoplasm.</text>
</comment>
<comment type="domain">
    <text evidence="1">Consists of 3 domains; the N-terminus binds the ribosome, the middle domain has PPIase activity, while the C-terminus has intrinsic chaperone activity on its own.</text>
</comment>
<comment type="similarity">
    <text evidence="1">Belongs to the FKBP-type PPIase family. Tig subfamily.</text>
</comment>
<comment type="sequence caution" evidence="3">
    <conflict type="erroneous initiation">
        <sequence resource="EMBL-CDS" id="AAN29826"/>
    </conflict>
</comment>
<comment type="sequence caution" evidence="3">
    <conflict type="erroneous initiation">
        <sequence resource="EMBL-CDS" id="AEM18243"/>
    </conflict>
    <text>Extended N-terminus.</text>
</comment>
<reference key="1">
    <citation type="journal article" date="2002" name="Proc. Natl. Acad. Sci. U.S.A.">
        <title>The Brucella suis genome reveals fundamental similarities between animal and plant pathogens and symbionts.</title>
        <authorList>
            <person name="Paulsen I.T."/>
            <person name="Seshadri R."/>
            <person name="Nelson K.E."/>
            <person name="Eisen J.A."/>
            <person name="Heidelberg J.F."/>
            <person name="Read T.D."/>
            <person name="Dodson R.J."/>
            <person name="Umayam L.A."/>
            <person name="Brinkac L.M."/>
            <person name="Beanan M.J."/>
            <person name="Daugherty S.C."/>
            <person name="DeBoy R.T."/>
            <person name="Durkin A.S."/>
            <person name="Kolonay J.F."/>
            <person name="Madupu R."/>
            <person name="Nelson W.C."/>
            <person name="Ayodeji B."/>
            <person name="Kraul M."/>
            <person name="Shetty J."/>
            <person name="Malek J.A."/>
            <person name="Van Aken S.E."/>
            <person name="Riedmuller S."/>
            <person name="Tettelin H."/>
            <person name="Gill S.R."/>
            <person name="White O."/>
            <person name="Salzberg S.L."/>
            <person name="Hoover D.L."/>
            <person name="Lindler L.E."/>
            <person name="Halling S.M."/>
            <person name="Boyle S.M."/>
            <person name="Fraser C.M."/>
        </authorList>
    </citation>
    <scope>NUCLEOTIDE SEQUENCE [LARGE SCALE GENOMIC DNA]</scope>
    <source>
        <strain>1330</strain>
    </source>
</reference>
<reference key="2">
    <citation type="journal article" date="2011" name="J. Bacteriol.">
        <title>Revised genome sequence of Brucella suis 1330.</title>
        <authorList>
            <person name="Tae H."/>
            <person name="Shallom S."/>
            <person name="Settlage R."/>
            <person name="Preston D."/>
            <person name="Adams L.G."/>
            <person name="Garner H.R."/>
        </authorList>
    </citation>
    <scope>NUCLEOTIDE SEQUENCE [LARGE SCALE GENOMIC DNA]</scope>
    <source>
        <strain>1330</strain>
    </source>
</reference>
<feature type="chain" id="PRO_0000179325" description="Trigger factor">
    <location>
        <begin position="1"/>
        <end position="477"/>
    </location>
</feature>
<feature type="domain" description="PPIase FKBP-type" evidence="1">
    <location>
        <begin position="169"/>
        <end position="254"/>
    </location>
</feature>
<feature type="region of interest" description="Disordered" evidence="2">
    <location>
        <begin position="435"/>
        <end position="477"/>
    </location>
</feature>
<feature type="compositionally biased region" description="Basic residues" evidence="2">
    <location>
        <begin position="454"/>
        <end position="466"/>
    </location>
</feature>
<feature type="compositionally biased region" description="Basic and acidic residues" evidence="2">
    <location>
        <begin position="467"/>
        <end position="477"/>
    </location>
</feature>
<accession>Q8G129</accession>
<accession>G0K9C6</accession>
<keyword id="KW-0131">Cell cycle</keyword>
<keyword id="KW-0132">Cell division</keyword>
<keyword id="KW-0143">Chaperone</keyword>
<keyword id="KW-0963">Cytoplasm</keyword>
<keyword id="KW-0413">Isomerase</keyword>
<keyword id="KW-0697">Rotamase</keyword>
<gene>
    <name evidence="1" type="primary">tig</name>
    <name type="ordered locus">BR0898</name>
    <name type="ordered locus">BS1330_I0894</name>
</gene>
<protein>
    <recommendedName>
        <fullName evidence="1">Trigger factor</fullName>
        <shortName evidence="1">TF</shortName>
        <ecNumber evidence="1">5.2.1.8</ecNumber>
    </recommendedName>
    <alternativeName>
        <fullName evidence="1">PPIase</fullName>
    </alternativeName>
</protein>
<name>TIG_BRUSU</name>
<evidence type="ECO:0000255" key="1">
    <source>
        <dbReference type="HAMAP-Rule" id="MF_00303"/>
    </source>
</evidence>
<evidence type="ECO:0000256" key="2">
    <source>
        <dbReference type="SAM" id="MobiDB-lite"/>
    </source>
</evidence>
<evidence type="ECO:0000305" key="3"/>
<proteinExistence type="inferred from homology"/>